<reference key="1">
    <citation type="submission" date="2006-12" db="EMBL/GenBank/DDBJ databases">
        <title>Complete sequence of chromosome 1 of Paracoccus denitrificans PD1222.</title>
        <authorList>
            <person name="Copeland A."/>
            <person name="Lucas S."/>
            <person name="Lapidus A."/>
            <person name="Barry K."/>
            <person name="Detter J.C."/>
            <person name="Glavina del Rio T."/>
            <person name="Hammon N."/>
            <person name="Israni S."/>
            <person name="Dalin E."/>
            <person name="Tice H."/>
            <person name="Pitluck S."/>
            <person name="Munk A.C."/>
            <person name="Brettin T."/>
            <person name="Bruce D."/>
            <person name="Han C."/>
            <person name="Tapia R."/>
            <person name="Gilna P."/>
            <person name="Schmutz J."/>
            <person name="Larimer F."/>
            <person name="Land M."/>
            <person name="Hauser L."/>
            <person name="Kyrpides N."/>
            <person name="Lykidis A."/>
            <person name="Spiro S."/>
            <person name="Richardson D.J."/>
            <person name="Moir J.W.B."/>
            <person name="Ferguson S.J."/>
            <person name="van Spanning R.J.M."/>
            <person name="Richardson P."/>
        </authorList>
    </citation>
    <scope>NUCLEOTIDE SEQUENCE [LARGE SCALE GENOMIC DNA]</scope>
    <source>
        <strain>Pd 1222</strain>
    </source>
</reference>
<proteinExistence type="inferred from homology"/>
<dbReference type="EC" id="7.4.2.8" evidence="1"/>
<dbReference type="EMBL" id="CP000489">
    <property type="protein sequence ID" value="ABL70686.1"/>
    <property type="status" value="ALT_INIT"/>
    <property type="molecule type" value="Genomic_DNA"/>
</dbReference>
<dbReference type="RefSeq" id="WP_011748879.1">
    <property type="nucleotide sequence ID" value="NC_008686.1"/>
</dbReference>
<dbReference type="SMR" id="A1B592"/>
<dbReference type="STRING" id="318586.Pden_2599"/>
<dbReference type="EnsemblBacteria" id="ABL70686">
    <property type="protein sequence ID" value="ABL70686"/>
    <property type="gene ID" value="Pden_2599"/>
</dbReference>
<dbReference type="GeneID" id="93450991"/>
<dbReference type="KEGG" id="pde:Pden_2599"/>
<dbReference type="eggNOG" id="COG0653">
    <property type="taxonomic scope" value="Bacteria"/>
</dbReference>
<dbReference type="HOGENOM" id="CLU_005314_3_0_5"/>
<dbReference type="OrthoDB" id="9805579at2"/>
<dbReference type="Proteomes" id="UP000000361">
    <property type="component" value="Chromosome 1"/>
</dbReference>
<dbReference type="GO" id="GO:0031522">
    <property type="term" value="C:cell envelope Sec protein transport complex"/>
    <property type="evidence" value="ECO:0007669"/>
    <property type="project" value="TreeGrafter"/>
</dbReference>
<dbReference type="GO" id="GO:0005829">
    <property type="term" value="C:cytosol"/>
    <property type="evidence" value="ECO:0007669"/>
    <property type="project" value="TreeGrafter"/>
</dbReference>
<dbReference type="GO" id="GO:0005886">
    <property type="term" value="C:plasma membrane"/>
    <property type="evidence" value="ECO:0007669"/>
    <property type="project" value="UniProtKB-SubCell"/>
</dbReference>
<dbReference type="GO" id="GO:0005524">
    <property type="term" value="F:ATP binding"/>
    <property type="evidence" value="ECO:0007669"/>
    <property type="project" value="UniProtKB-UniRule"/>
</dbReference>
<dbReference type="GO" id="GO:0046872">
    <property type="term" value="F:metal ion binding"/>
    <property type="evidence" value="ECO:0007669"/>
    <property type="project" value="UniProtKB-KW"/>
</dbReference>
<dbReference type="GO" id="GO:0008564">
    <property type="term" value="F:protein-exporting ATPase activity"/>
    <property type="evidence" value="ECO:0007669"/>
    <property type="project" value="UniProtKB-EC"/>
</dbReference>
<dbReference type="GO" id="GO:0065002">
    <property type="term" value="P:intracellular protein transmembrane transport"/>
    <property type="evidence" value="ECO:0007669"/>
    <property type="project" value="UniProtKB-UniRule"/>
</dbReference>
<dbReference type="GO" id="GO:0017038">
    <property type="term" value="P:protein import"/>
    <property type="evidence" value="ECO:0007669"/>
    <property type="project" value="InterPro"/>
</dbReference>
<dbReference type="GO" id="GO:0006605">
    <property type="term" value="P:protein targeting"/>
    <property type="evidence" value="ECO:0007669"/>
    <property type="project" value="UniProtKB-UniRule"/>
</dbReference>
<dbReference type="GO" id="GO:0043952">
    <property type="term" value="P:protein transport by the Sec complex"/>
    <property type="evidence" value="ECO:0007669"/>
    <property type="project" value="TreeGrafter"/>
</dbReference>
<dbReference type="CDD" id="cd17928">
    <property type="entry name" value="DEXDc_SecA"/>
    <property type="match status" value="1"/>
</dbReference>
<dbReference type="CDD" id="cd18803">
    <property type="entry name" value="SF2_C_secA"/>
    <property type="match status" value="1"/>
</dbReference>
<dbReference type="FunFam" id="3.40.50.300:FF:000113">
    <property type="entry name" value="Preprotein translocase subunit SecA"/>
    <property type="match status" value="1"/>
</dbReference>
<dbReference type="FunFam" id="3.90.1440.10:FF:000001">
    <property type="entry name" value="Preprotein translocase subunit SecA"/>
    <property type="match status" value="1"/>
</dbReference>
<dbReference type="FunFam" id="1.10.3060.10:FF:000003">
    <property type="entry name" value="Protein translocase subunit SecA"/>
    <property type="match status" value="1"/>
</dbReference>
<dbReference type="Gene3D" id="1.10.3060.10">
    <property type="entry name" value="Helical scaffold and wing domains of SecA"/>
    <property type="match status" value="1"/>
</dbReference>
<dbReference type="Gene3D" id="3.40.50.300">
    <property type="entry name" value="P-loop containing nucleotide triphosphate hydrolases"/>
    <property type="match status" value="2"/>
</dbReference>
<dbReference type="Gene3D" id="3.90.1440.10">
    <property type="entry name" value="SecA, preprotein cross-linking domain"/>
    <property type="match status" value="1"/>
</dbReference>
<dbReference type="HAMAP" id="MF_01382">
    <property type="entry name" value="SecA"/>
    <property type="match status" value="1"/>
</dbReference>
<dbReference type="InterPro" id="IPR014001">
    <property type="entry name" value="Helicase_ATP-bd"/>
</dbReference>
<dbReference type="InterPro" id="IPR001650">
    <property type="entry name" value="Helicase_C-like"/>
</dbReference>
<dbReference type="InterPro" id="IPR027417">
    <property type="entry name" value="P-loop_NTPase"/>
</dbReference>
<dbReference type="InterPro" id="IPR004027">
    <property type="entry name" value="SEC_C_motif"/>
</dbReference>
<dbReference type="InterPro" id="IPR000185">
    <property type="entry name" value="SecA"/>
</dbReference>
<dbReference type="InterPro" id="IPR020937">
    <property type="entry name" value="SecA_CS"/>
</dbReference>
<dbReference type="InterPro" id="IPR011115">
    <property type="entry name" value="SecA_DEAD"/>
</dbReference>
<dbReference type="InterPro" id="IPR014018">
    <property type="entry name" value="SecA_motor_DEAD"/>
</dbReference>
<dbReference type="InterPro" id="IPR011130">
    <property type="entry name" value="SecA_preprotein_X-link_dom"/>
</dbReference>
<dbReference type="InterPro" id="IPR044722">
    <property type="entry name" value="SecA_SF2_C"/>
</dbReference>
<dbReference type="InterPro" id="IPR011116">
    <property type="entry name" value="SecA_Wing/Scaffold"/>
</dbReference>
<dbReference type="InterPro" id="IPR036266">
    <property type="entry name" value="SecA_Wing/Scaffold_sf"/>
</dbReference>
<dbReference type="InterPro" id="IPR036670">
    <property type="entry name" value="SecA_X-link_sf"/>
</dbReference>
<dbReference type="NCBIfam" id="NF009538">
    <property type="entry name" value="PRK12904.1"/>
    <property type="match status" value="1"/>
</dbReference>
<dbReference type="NCBIfam" id="TIGR00963">
    <property type="entry name" value="secA"/>
    <property type="match status" value="1"/>
</dbReference>
<dbReference type="PANTHER" id="PTHR30612:SF0">
    <property type="entry name" value="CHLOROPLAST PROTEIN-TRANSPORTING ATPASE"/>
    <property type="match status" value="1"/>
</dbReference>
<dbReference type="PANTHER" id="PTHR30612">
    <property type="entry name" value="SECA INNER MEMBRANE COMPONENT OF SEC PROTEIN SECRETION SYSTEM"/>
    <property type="match status" value="1"/>
</dbReference>
<dbReference type="Pfam" id="PF21090">
    <property type="entry name" value="P-loop_SecA"/>
    <property type="match status" value="1"/>
</dbReference>
<dbReference type="Pfam" id="PF02810">
    <property type="entry name" value="SEC-C"/>
    <property type="match status" value="1"/>
</dbReference>
<dbReference type="Pfam" id="PF07517">
    <property type="entry name" value="SecA_DEAD"/>
    <property type="match status" value="1"/>
</dbReference>
<dbReference type="Pfam" id="PF01043">
    <property type="entry name" value="SecA_PP_bind"/>
    <property type="match status" value="1"/>
</dbReference>
<dbReference type="Pfam" id="PF07516">
    <property type="entry name" value="SecA_SW"/>
    <property type="match status" value="1"/>
</dbReference>
<dbReference type="PRINTS" id="PR00906">
    <property type="entry name" value="SECA"/>
</dbReference>
<dbReference type="SMART" id="SM00957">
    <property type="entry name" value="SecA_DEAD"/>
    <property type="match status" value="1"/>
</dbReference>
<dbReference type="SMART" id="SM00958">
    <property type="entry name" value="SecA_PP_bind"/>
    <property type="match status" value="1"/>
</dbReference>
<dbReference type="SUPFAM" id="SSF81886">
    <property type="entry name" value="Helical scaffold and wing domains of SecA"/>
    <property type="match status" value="1"/>
</dbReference>
<dbReference type="SUPFAM" id="SSF52540">
    <property type="entry name" value="P-loop containing nucleoside triphosphate hydrolases"/>
    <property type="match status" value="2"/>
</dbReference>
<dbReference type="SUPFAM" id="SSF81767">
    <property type="entry name" value="Pre-protein crosslinking domain of SecA"/>
    <property type="match status" value="1"/>
</dbReference>
<dbReference type="PROSITE" id="PS01312">
    <property type="entry name" value="SECA"/>
    <property type="match status" value="1"/>
</dbReference>
<dbReference type="PROSITE" id="PS51196">
    <property type="entry name" value="SECA_MOTOR_DEAD"/>
    <property type="match status" value="1"/>
</dbReference>
<gene>
    <name evidence="1" type="primary">secA</name>
    <name type="ordered locus">Pden_2599</name>
</gene>
<evidence type="ECO:0000255" key="1">
    <source>
        <dbReference type="HAMAP-Rule" id="MF_01382"/>
    </source>
</evidence>
<evidence type="ECO:0000256" key="2">
    <source>
        <dbReference type="SAM" id="MobiDB-lite"/>
    </source>
</evidence>
<evidence type="ECO:0000305" key="3"/>
<comment type="function">
    <text evidence="1">Part of the Sec protein translocase complex. Interacts with the SecYEG preprotein conducting channel. Has a central role in coupling the hydrolysis of ATP to the transfer of proteins into and across the cell membrane, serving both as a receptor for the preprotein-SecB complex and as an ATP-driven molecular motor driving the stepwise translocation of polypeptide chains across the membrane.</text>
</comment>
<comment type="catalytic activity">
    <reaction evidence="1">
        <text>ATP + H2O + cellular proteinSide 1 = ADP + phosphate + cellular proteinSide 2.</text>
        <dbReference type="EC" id="7.4.2.8"/>
    </reaction>
</comment>
<comment type="cofactor">
    <cofactor evidence="1">
        <name>Zn(2+)</name>
        <dbReference type="ChEBI" id="CHEBI:29105"/>
    </cofactor>
    <text evidence="1">May bind 1 zinc ion per subunit.</text>
</comment>
<comment type="subunit">
    <text evidence="1">Monomer and homodimer. Part of the essential Sec protein translocation apparatus which comprises SecA, SecYEG and auxiliary proteins SecDF-YajC and YidC.</text>
</comment>
<comment type="subcellular location">
    <subcellularLocation>
        <location evidence="1">Cell inner membrane</location>
        <topology evidence="1">Peripheral membrane protein</topology>
        <orientation evidence="1">Cytoplasmic side</orientation>
    </subcellularLocation>
    <subcellularLocation>
        <location evidence="1">Cytoplasm</location>
    </subcellularLocation>
    <text evidence="1">Distribution is 50-50.</text>
</comment>
<comment type="similarity">
    <text evidence="1">Belongs to the SecA family.</text>
</comment>
<comment type="sequence caution" evidence="3">
    <conflict type="erroneous initiation">
        <sequence resource="EMBL-CDS" id="ABL70686"/>
    </conflict>
    <text>Extended N-terminus.</text>
</comment>
<sequence>MLGIGNLAKLVFGTPNDRKVKSARPLVAQVNALEEQFRALSDADLIGKTRELQGRAQSGEDLDKLLPEAFANCREAARRALGLRAFDTQLMGGIFLHQGNIAEMKTGEGKTLVATFPAYLNALAGKGVHVVTVNDYLAKRDAHWMGKVFAQLGMTTGVVYPFQDDAEKREAYRADVTYATNNELGFDYLRDNMKGSIEQMTQRGHFFAIVDEVDSILIDEARTPLIISGPSQDRSELYKTLDAFMPELAPEHYKLDEKARNATFTEEGNEFLEKRLQAAGILPEGQTLYDPESTTIVHHANQAMRAHKLFMRDQHYIVRDDEVVLIDEFTGRMMKGRRLSDGLHQAIEAKEGVSIQPENVTLASVTFQNYFRLYDKLSGMTGTAATEAEEFAEIYKLGVVEVPTNRPVQRIDEHDRVYRTATEKYAAVIEAIKEAHAKGQPILVGTTSIEKSEMLSQMLTKEGIQHNVLNARQHEQEAKIVADAGKLGAVTIATNMAGRGTDIQLGGNVEMKVMEALAADPEANPDEVRARIEAEHAAEKQAVLDAGGLFVLATERHESRRIDNQLRGRSGRQGDPGRSLFFLSLEDDLMRIFGSERLDKVLSTLGMKEGEAIVHPWVNKSLERAQAKVEGRNFDIRKQLLKFDDVMNDQRKAIFSQRLEIMHTEEVGDIAADMRAQVIDDLIDRHLPPRAYAEQWDVKGLHDAVIDRLNMDLPITDWAGEDGVDQDTIRERIQQATDAYMAQKAEQFGPENMRQIEKQVLLQQIDSKWREHLVTLEHLRSVVGFRGYAQRDPLSEYKTEGFQLFETMLDGLRFDVTQQLARIRPLTDAEREQMLREYQQQQAETEAQMHPEHEEAEGGEVSGRVAGFDETDPTTWGNPSRNDPCPCGSGKKFKHCHGVLA</sequence>
<protein>
    <recommendedName>
        <fullName evidence="1">Protein translocase subunit SecA</fullName>
        <ecNumber evidence="1">7.4.2.8</ecNumber>
    </recommendedName>
</protein>
<organism>
    <name type="scientific">Paracoccus denitrificans (strain Pd 1222)</name>
    <dbReference type="NCBI Taxonomy" id="318586"/>
    <lineage>
        <taxon>Bacteria</taxon>
        <taxon>Pseudomonadati</taxon>
        <taxon>Pseudomonadota</taxon>
        <taxon>Alphaproteobacteria</taxon>
        <taxon>Rhodobacterales</taxon>
        <taxon>Paracoccaceae</taxon>
        <taxon>Paracoccus</taxon>
    </lineage>
</organism>
<keyword id="KW-0067">ATP-binding</keyword>
<keyword id="KW-0997">Cell inner membrane</keyword>
<keyword id="KW-1003">Cell membrane</keyword>
<keyword id="KW-0963">Cytoplasm</keyword>
<keyword id="KW-0472">Membrane</keyword>
<keyword id="KW-0479">Metal-binding</keyword>
<keyword id="KW-0547">Nucleotide-binding</keyword>
<keyword id="KW-0653">Protein transport</keyword>
<keyword id="KW-1185">Reference proteome</keyword>
<keyword id="KW-1278">Translocase</keyword>
<keyword id="KW-0811">Translocation</keyword>
<keyword id="KW-0813">Transport</keyword>
<keyword id="KW-0862">Zinc</keyword>
<feature type="chain" id="PRO_0000320881" description="Protein translocase subunit SecA">
    <location>
        <begin position="1"/>
        <end position="901"/>
    </location>
</feature>
<feature type="region of interest" description="Disordered" evidence="2">
    <location>
        <begin position="838"/>
        <end position="883"/>
    </location>
</feature>
<feature type="binding site" evidence="1">
    <location>
        <position position="89"/>
    </location>
    <ligand>
        <name>ATP</name>
        <dbReference type="ChEBI" id="CHEBI:30616"/>
    </ligand>
</feature>
<feature type="binding site" evidence="1">
    <location>
        <begin position="107"/>
        <end position="111"/>
    </location>
    <ligand>
        <name>ATP</name>
        <dbReference type="ChEBI" id="CHEBI:30616"/>
    </ligand>
</feature>
<feature type="binding site" evidence="1">
    <location>
        <position position="502"/>
    </location>
    <ligand>
        <name>ATP</name>
        <dbReference type="ChEBI" id="CHEBI:30616"/>
    </ligand>
</feature>
<feature type="binding site" evidence="1">
    <location>
        <position position="885"/>
    </location>
    <ligand>
        <name>Zn(2+)</name>
        <dbReference type="ChEBI" id="CHEBI:29105"/>
    </ligand>
</feature>
<feature type="binding site" evidence="1">
    <location>
        <position position="887"/>
    </location>
    <ligand>
        <name>Zn(2+)</name>
        <dbReference type="ChEBI" id="CHEBI:29105"/>
    </ligand>
</feature>
<feature type="binding site" evidence="1">
    <location>
        <position position="896"/>
    </location>
    <ligand>
        <name>Zn(2+)</name>
        <dbReference type="ChEBI" id="CHEBI:29105"/>
    </ligand>
</feature>
<feature type="binding site" evidence="1">
    <location>
        <position position="897"/>
    </location>
    <ligand>
        <name>Zn(2+)</name>
        <dbReference type="ChEBI" id="CHEBI:29105"/>
    </ligand>
</feature>
<accession>A1B592</accession>
<name>SECA_PARDP</name>